<name>RS17_LEPCP</name>
<proteinExistence type="inferred from homology"/>
<gene>
    <name evidence="1" type="primary">rpsQ</name>
    <name type="ordered locus">Lcho_3990</name>
</gene>
<feature type="chain" id="PRO_1000143268" description="Small ribosomal subunit protein uS17">
    <location>
        <begin position="1"/>
        <end position="98"/>
    </location>
</feature>
<keyword id="KW-1185">Reference proteome</keyword>
<keyword id="KW-0687">Ribonucleoprotein</keyword>
<keyword id="KW-0689">Ribosomal protein</keyword>
<keyword id="KW-0694">RNA-binding</keyword>
<keyword id="KW-0699">rRNA-binding</keyword>
<accession>B1Y8H8</accession>
<sequence length="98" mass="10874">MSEAQTAVAAAAPAVKNTRTLVGKVVSDKRAKTVTVLVERRAKHELYGKIVARSRKYHAHDENGDYKMGDVVEISESRPLSKTKNWVVTRLVEKARAV</sequence>
<evidence type="ECO:0000255" key="1">
    <source>
        <dbReference type="HAMAP-Rule" id="MF_01345"/>
    </source>
</evidence>
<evidence type="ECO:0000305" key="2"/>
<dbReference type="EMBL" id="CP001013">
    <property type="protein sequence ID" value="ACB36244.1"/>
    <property type="molecule type" value="Genomic_DNA"/>
</dbReference>
<dbReference type="RefSeq" id="WP_012348989.1">
    <property type="nucleotide sequence ID" value="NC_010524.1"/>
</dbReference>
<dbReference type="SMR" id="B1Y8H8"/>
<dbReference type="STRING" id="395495.Lcho_3990"/>
<dbReference type="KEGG" id="lch:Lcho_3990"/>
<dbReference type="eggNOG" id="COG0186">
    <property type="taxonomic scope" value="Bacteria"/>
</dbReference>
<dbReference type="HOGENOM" id="CLU_073626_1_1_4"/>
<dbReference type="OrthoDB" id="9811714at2"/>
<dbReference type="Proteomes" id="UP000001693">
    <property type="component" value="Chromosome"/>
</dbReference>
<dbReference type="GO" id="GO:0022627">
    <property type="term" value="C:cytosolic small ribosomal subunit"/>
    <property type="evidence" value="ECO:0007669"/>
    <property type="project" value="TreeGrafter"/>
</dbReference>
<dbReference type="GO" id="GO:0019843">
    <property type="term" value="F:rRNA binding"/>
    <property type="evidence" value="ECO:0007669"/>
    <property type="project" value="UniProtKB-UniRule"/>
</dbReference>
<dbReference type="GO" id="GO:0003735">
    <property type="term" value="F:structural constituent of ribosome"/>
    <property type="evidence" value="ECO:0007669"/>
    <property type="project" value="InterPro"/>
</dbReference>
<dbReference type="GO" id="GO:0006412">
    <property type="term" value="P:translation"/>
    <property type="evidence" value="ECO:0007669"/>
    <property type="project" value="UniProtKB-UniRule"/>
</dbReference>
<dbReference type="CDD" id="cd00364">
    <property type="entry name" value="Ribosomal_uS17"/>
    <property type="match status" value="1"/>
</dbReference>
<dbReference type="Gene3D" id="2.40.50.140">
    <property type="entry name" value="Nucleic acid-binding proteins"/>
    <property type="match status" value="1"/>
</dbReference>
<dbReference type="HAMAP" id="MF_01345_B">
    <property type="entry name" value="Ribosomal_uS17_B"/>
    <property type="match status" value="1"/>
</dbReference>
<dbReference type="InterPro" id="IPR012340">
    <property type="entry name" value="NA-bd_OB-fold"/>
</dbReference>
<dbReference type="InterPro" id="IPR000266">
    <property type="entry name" value="Ribosomal_uS17"/>
</dbReference>
<dbReference type="InterPro" id="IPR019984">
    <property type="entry name" value="Ribosomal_uS17_bact/chlr"/>
</dbReference>
<dbReference type="InterPro" id="IPR019979">
    <property type="entry name" value="Ribosomal_uS17_CS"/>
</dbReference>
<dbReference type="NCBIfam" id="NF004123">
    <property type="entry name" value="PRK05610.1"/>
    <property type="match status" value="1"/>
</dbReference>
<dbReference type="NCBIfam" id="TIGR03635">
    <property type="entry name" value="uS17_bact"/>
    <property type="match status" value="1"/>
</dbReference>
<dbReference type="PANTHER" id="PTHR10744">
    <property type="entry name" value="40S RIBOSOMAL PROTEIN S11 FAMILY MEMBER"/>
    <property type="match status" value="1"/>
</dbReference>
<dbReference type="PANTHER" id="PTHR10744:SF1">
    <property type="entry name" value="SMALL RIBOSOMAL SUBUNIT PROTEIN US17M"/>
    <property type="match status" value="1"/>
</dbReference>
<dbReference type="Pfam" id="PF00366">
    <property type="entry name" value="Ribosomal_S17"/>
    <property type="match status" value="1"/>
</dbReference>
<dbReference type="PRINTS" id="PR00973">
    <property type="entry name" value="RIBOSOMALS17"/>
</dbReference>
<dbReference type="SUPFAM" id="SSF50249">
    <property type="entry name" value="Nucleic acid-binding proteins"/>
    <property type="match status" value="1"/>
</dbReference>
<dbReference type="PROSITE" id="PS00056">
    <property type="entry name" value="RIBOSOMAL_S17"/>
    <property type="match status" value="1"/>
</dbReference>
<comment type="function">
    <text evidence="1">One of the primary rRNA binding proteins, it binds specifically to the 5'-end of 16S ribosomal RNA.</text>
</comment>
<comment type="subunit">
    <text evidence="1">Part of the 30S ribosomal subunit.</text>
</comment>
<comment type="similarity">
    <text evidence="1">Belongs to the universal ribosomal protein uS17 family.</text>
</comment>
<organism>
    <name type="scientific">Leptothrix cholodnii (strain ATCC 51168 / LMG 8142 / SP-6)</name>
    <name type="common">Leptothrix discophora (strain SP-6)</name>
    <dbReference type="NCBI Taxonomy" id="395495"/>
    <lineage>
        <taxon>Bacteria</taxon>
        <taxon>Pseudomonadati</taxon>
        <taxon>Pseudomonadota</taxon>
        <taxon>Betaproteobacteria</taxon>
        <taxon>Burkholderiales</taxon>
        <taxon>Sphaerotilaceae</taxon>
        <taxon>Leptothrix</taxon>
    </lineage>
</organism>
<reference key="1">
    <citation type="submission" date="2008-03" db="EMBL/GenBank/DDBJ databases">
        <title>Complete sequence of Leptothrix cholodnii SP-6.</title>
        <authorList>
            <consortium name="US DOE Joint Genome Institute"/>
            <person name="Copeland A."/>
            <person name="Lucas S."/>
            <person name="Lapidus A."/>
            <person name="Glavina del Rio T."/>
            <person name="Dalin E."/>
            <person name="Tice H."/>
            <person name="Bruce D."/>
            <person name="Goodwin L."/>
            <person name="Pitluck S."/>
            <person name="Chertkov O."/>
            <person name="Brettin T."/>
            <person name="Detter J.C."/>
            <person name="Han C."/>
            <person name="Kuske C.R."/>
            <person name="Schmutz J."/>
            <person name="Larimer F."/>
            <person name="Land M."/>
            <person name="Hauser L."/>
            <person name="Kyrpides N."/>
            <person name="Lykidis A."/>
            <person name="Emerson D."/>
            <person name="Richardson P."/>
        </authorList>
    </citation>
    <scope>NUCLEOTIDE SEQUENCE [LARGE SCALE GENOMIC DNA]</scope>
    <source>
        <strain>ATCC 51168 / LMG 8142 / SP-6</strain>
    </source>
</reference>
<protein>
    <recommendedName>
        <fullName evidence="1">Small ribosomal subunit protein uS17</fullName>
    </recommendedName>
    <alternativeName>
        <fullName evidence="2">30S ribosomal protein S17</fullName>
    </alternativeName>
</protein>